<feature type="chain" id="PRO_0000080401" description="G2/mitotic-specific cyclin cig2">
    <location>
        <begin position="1"/>
        <end position="411"/>
    </location>
</feature>
<feature type="domain" description="Cyclin N-terminal">
    <location>
        <begin position="139"/>
        <end position="265"/>
    </location>
</feature>
<feature type="region of interest" description="Disordered" evidence="1">
    <location>
        <begin position="57"/>
        <end position="89"/>
    </location>
</feature>
<feature type="region of interest" description="Interaction with pop1">
    <location>
        <begin position="181"/>
        <end position="273"/>
    </location>
</feature>
<feature type="short sequence motif" description="Destruction box">
    <location>
        <begin position="51"/>
        <end position="60"/>
    </location>
</feature>
<feature type="compositionally biased region" description="Basic and acidic residues" evidence="1">
    <location>
        <begin position="64"/>
        <end position="78"/>
    </location>
</feature>
<feature type="mutagenesis site" description="Improves protein stability; when associated with A-54." evidence="2">
    <original>R</original>
    <variation>A</variation>
    <location>
        <position position="51"/>
    </location>
</feature>
<feature type="mutagenesis site" description="Improves protein stability; when associated with A-51." evidence="2">
    <original>L</original>
    <variation>A</variation>
    <location>
        <position position="54"/>
    </location>
</feature>
<feature type="mutagenesis site" description="Prevents binding to cdc2 and improves protein stability; when associated with A-170 and A-171." evidence="2">
    <original>R</original>
    <variation>A</variation>
    <location>
        <position position="169"/>
    </location>
</feature>
<feature type="mutagenesis site" description="Prevents binding to cdc2 and improves protein stability; when associated with A-169 and A-171." evidence="2">
    <original>E</original>
    <variation>A</variation>
    <location>
        <position position="170"/>
    </location>
</feature>
<feature type="mutagenesis site" description="Prevents binding to cdc2 and improves protein stability; when associated with A-169 and A-170." evidence="2">
    <original>I</original>
    <variation>A</variation>
    <location>
        <position position="171"/>
    </location>
</feature>
<feature type="mutagenesis site" description="No effect on protein stability; when associated with A-329." evidence="2">
    <original>S</original>
    <variation>N</variation>
    <location>
        <position position="268"/>
    </location>
</feature>
<feature type="mutagenesis site" description="No effect on protein stability; when associated with N-268." evidence="2">
    <original>T</original>
    <variation>A</variation>
    <location>
        <position position="329"/>
    </location>
</feature>
<feature type="sequence conflict" description="In Ref. 1; CAA49640." evidence="10" ref="1">
    <original>MALYSISKPVGSKINKHSYQDENTLVGKQALSKGTEKTKLSTNFEINLP</original>
    <variation>MKTHLLANKLYQKGLRRQNYLQICKLICHA</variation>
    <location>
        <begin position="1"/>
        <end position="49"/>
    </location>
</feature>
<feature type="sequence conflict" description="In Ref. 1; CAA49640." evidence="10" ref="1">
    <original>VSNVDD</original>
    <variation>ALMLMN</variation>
    <location>
        <begin position="119"/>
        <end position="124"/>
    </location>
</feature>
<feature type="sequence conflict" description="In Ref. 1; CAA49640." evidence="10" ref="1">
    <location>
        <position position="315"/>
    </location>
</feature>
<feature type="sequence conflict" description="In Ref. 1; CAA49640." evidence="10" ref="1">
    <original>P</original>
    <variation>A</variation>
    <location>
        <position position="330"/>
    </location>
</feature>
<feature type="sequence conflict" description="In Ref. 1; CAA49640." evidence="10" ref="1">
    <original>H</original>
    <variation>QRTLL</variation>
    <location>
        <position position="411"/>
    </location>
</feature>
<organism>
    <name type="scientific">Schizosaccharomyces pombe (strain 972 / ATCC 24843)</name>
    <name type="common">Fission yeast</name>
    <dbReference type="NCBI Taxonomy" id="284812"/>
    <lineage>
        <taxon>Eukaryota</taxon>
        <taxon>Fungi</taxon>
        <taxon>Dikarya</taxon>
        <taxon>Ascomycota</taxon>
        <taxon>Taphrinomycotina</taxon>
        <taxon>Schizosaccharomycetes</taxon>
        <taxon>Schizosaccharomycetales</taxon>
        <taxon>Schizosaccharomycetaceae</taxon>
        <taxon>Schizosaccharomyces</taxon>
    </lineage>
</organism>
<keyword id="KW-0131">Cell cycle</keyword>
<keyword id="KW-0132">Cell division</keyword>
<keyword id="KW-0184">Conjugation</keyword>
<keyword id="KW-0195">Cyclin</keyword>
<keyword id="KW-0963">Cytoplasm</keyword>
<keyword id="KW-0206">Cytoskeleton</keyword>
<keyword id="KW-0498">Mitosis</keyword>
<keyword id="KW-0539">Nucleus</keyword>
<keyword id="KW-0597">Phosphoprotein</keyword>
<keyword id="KW-1185">Reference proteome</keyword>
<comment type="function">
    <text evidence="2 3 4 5 6 7 8">Essential for the control of the cell cycle at the G2/M and G1/S (mitosis) transition. Interacts with the cdc2 protein kinase to form MPF. Interaction with res2 promotes the phosphorylation of res1 and inhibits MBF-dependent gene transcription. Forms an autoregulating feedback-inhibition loop with MBF which is important for normal regulation of the cell cycle. G2/M cyclins accumulate steadily during G2 and are abruptly destroyed at mitosis. Negatively regulates conjugation via interacting with cell cycle 'start' genes. Degraded by skp1, pop1 and pop2 in the G2 and M phases of the cell cycle.</text>
</comment>
<comment type="subunit">
    <text evidence="2 3 4 7 9">Associates with cdc2, res2 and rum1. Interacts with pop1 only when phosphorylated.</text>
</comment>
<comment type="interaction">
    <interactant intactId="EBI-1149212">
        <id>P36630</id>
    </interactant>
    <interactant intactId="EBI-1185389">
        <id>P87060</id>
        <label>pop1</label>
    </interactant>
    <organismsDiffer>false</organismsDiffer>
    <experiments>4</experiments>
</comment>
<comment type="interaction">
    <interactant intactId="EBI-1149212">
        <id>P36630</id>
    </interactant>
    <interactant intactId="EBI-1149288">
        <id>P33520</id>
        <label>res1</label>
    </interactant>
    <organismsDiffer>false</organismsDiffer>
    <experiments>3</experiments>
</comment>
<comment type="interaction">
    <interactant intactId="EBI-1149212">
        <id>P36630</id>
    </interactant>
    <interactant intactId="EBI-1149177">
        <id>P41412</id>
        <label>res2</label>
    </interactant>
    <organismsDiffer>false</organismsDiffer>
    <experiments>3</experiments>
</comment>
<comment type="interaction">
    <interactant intactId="EBI-1149212">
        <id>P36630</id>
    </interactant>
    <interactant intactId="EBI-1187892">
        <id>P40380</id>
        <label>rum1</label>
    </interactant>
    <organismsDiffer>false</organismsDiffer>
    <experiments>2</experiments>
</comment>
<comment type="subcellular location">
    <subcellularLocation>
        <location>Nucleus</location>
    </subcellularLocation>
    <subcellularLocation>
        <location>Cytoplasm</location>
        <location>Cytoskeleton</location>
        <location>Microtubule organizing center</location>
        <location>Spindle pole body</location>
    </subcellularLocation>
</comment>
<comment type="induction">
    <text evidence="5">Highly induced upon nitrogen starvation and during conjugation.</text>
</comment>
<comment type="PTM">
    <text evidence="2">Phosphorylated.</text>
</comment>
<comment type="similarity">
    <text evidence="10">Belongs to the cyclin family. Cyclin AB subfamily.</text>
</comment>
<dbReference type="EMBL" id="X70046">
    <property type="protein sequence ID" value="CAA49640.1"/>
    <property type="molecule type" value="mRNA"/>
</dbReference>
<dbReference type="EMBL" id="D28751">
    <property type="protein sequence ID" value="BAA05943.1"/>
    <property type="molecule type" value="mRNA"/>
</dbReference>
<dbReference type="EMBL" id="S67490">
    <property type="protein sequence ID" value="AAB29297.2"/>
    <property type="status" value="ALT_SEQ"/>
    <property type="molecule type" value="mRNA"/>
</dbReference>
<dbReference type="EMBL" id="CU329670">
    <property type="protein sequence ID" value="CAC21469.1"/>
    <property type="molecule type" value="Genomic_DNA"/>
</dbReference>
<dbReference type="PIR" id="A48100">
    <property type="entry name" value="A48100"/>
</dbReference>
<dbReference type="PIR" id="S44344">
    <property type="entry name" value="S44344"/>
</dbReference>
<dbReference type="PIR" id="T52009">
    <property type="entry name" value="T52009"/>
</dbReference>
<dbReference type="RefSeq" id="NP_593889.1">
    <property type="nucleotide sequence ID" value="NM_001019319.2"/>
</dbReference>
<dbReference type="SMR" id="P36630"/>
<dbReference type="BioGRID" id="279901">
    <property type="interactions" value="40"/>
</dbReference>
<dbReference type="FunCoup" id="P36630">
    <property type="interactions" value="832"/>
</dbReference>
<dbReference type="IntAct" id="P36630">
    <property type="interactions" value="5"/>
</dbReference>
<dbReference type="STRING" id="284812.P36630"/>
<dbReference type="iPTMnet" id="P36630"/>
<dbReference type="PaxDb" id="4896-SPAPB2B4.03.1"/>
<dbReference type="EnsemblFungi" id="SPAPB2B4.03.1">
    <property type="protein sequence ID" value="SPAPB2B4.03.1:pep"/>
    <property type="gene ID" value="SPAPB2B4.03"/>
</dbReference>
<dbReference type="GeneID" id="2543481"/>
<dbReference type="KEGG" id="spo:2543481"/>
<dbReference type="PomBase" id="SPAPB2B4.03">
    <property type="gene designation" value="cig2"/>
</dbReference>
<dbReference type="VEuPathDB" id="FungiDB:SPAPB2B4.03"/>
<dbReference type="eggNOG" id="KOG0653">
    <property type="taxonomic scope" value="Eukaryota"/>
</dbReference>
<dbReference type="HOGENOM" id="CLU_020695_2_0_1"/>
<dbReference type="InParanoid" id="P36630"/>
<dbReference type="OMA" id="IQNFVYM"/>
<dbReference type="PhylomeDB" id="P36630"/>
<dbReference type="PRO" id="PR:P36630"/>
<dbReference type="Proteomes" id="UP000002485">
    <property type="component" value="Chromosome I"/>
</dbReference>
<dbReference type="GO" id="GO:0000785">
    <property type="term" value="C:chromatin"/>
    <property type="evidence" value="ECO:0000314"/>
    <property type="project" value="PomBase"/>
</dbReference>
<dbReference type="GO" id="GO:0000307">
    <property type="term" value="C:cyclin-dependent protein kinase holoenzyme complex"/>
    <property type="evidence" value="ECO:0000269"/>
    <property type="project" value="PomBase"/>
</dbReference>
<dbReference type="GO" id="GO:0005737">
    <property type="term" value="C:cytoplasm"/>
    <property type="evidence" value="ECO:0000318"/>
    <property type="project" value="GO_Central"/>
</dbReference>
<dbReference type="GO" id="GO:0005815">
    <property type="term" value="C:microtubule organizing center"/>
    <property type="evidence" value="ECO:0000318"/>
    <property type="project" value="GO_Central"/>
</dbReference>
<dbReference type="GO" id="GO:0044732">
    <property type="term" value="C:mitotic spindle pole body"/>
    <property type="evidence" value="ECO:0007005"/>
    <property type="project" value="PomBase"/>
</dbReference>
<dbReference type="GO" id="GO:0005634">
    <property type="term" value="C:nucleus"/>
    <property type="evidence" value="ECO:0007005"/>
    <property type="project" value="PomBase"/>
</dbReference>
<dbReference type="GO" id="GO:0061575">
    <property type="term" value="F:cyclin-dependent protein serine/threonine kinase activator activity"/>
    <property type="evidence" value="ECO:0000314"/>
    <property type="project" value="PomBase"/>
</dbReference>
<dbReference type="GO" id="GO:0016538">
    <property type="term" value="F:cyclin-dependent protein serine/threonine kinase regulator activity"/>
    <property type="evidence" value="ECO:0000318"/>
    <property type="project" value="GO_Central"/>
</dbReference>
<dbReference type="GO" id="GO:0051301">
    <property type="term" value="P:cell division"/>
    <property type="evidence" value="ECO:0007669"/>
    <property type="project" value="UniProtKB-KW"/>
</dbReference>
<dbReference type="GO" id="GO:0006310">
    <property type="term" value="P:DNA recombination"/>
    <property type="evidence" value="ECO:0000315"/>
    <property type="project" value="PomBase"/>
</dbReference>
<dbReference type="GO" id="GO:0000082">
    <property type="term" value="P:G1/S transition of mitotic cell cycle"/>
    <property type="evidence" value="ECO:0000318"/>
    <property type="project" value="GO_Central"/>
</dbReference>
<dbReference type="GO" id="GO:0031568">
    <property type="term" value="P:mitotic G1 cell size control checkpoint signaling"/>
    <property type="evidence" value="ECO:0000316"/>
    <property type="project" value="PomBase"/>
</dbReference>
<dbReference type="GO" id="GO:0031138">
    <property type="term" value="P:negative regulation of conjugation with cellular fusion"/>
    <property type="evidence" value="ECO:0000315"/>
    <property type="project" value="PomBase"/>
</dbReference>
<dbReference type="GO" id="GO:1900087">
    <property type="term" value="P:positive regulation of G1/S transition of mitotic cell cycle"/>
    <property type="evidence" value="ECO:0000315"/>
    <property type="project" value="PomBase"/>
</dbReference>
<dbReference type="GO" id="GO:0110044">
    <property type="term" value="P:regulation of cell cycle switching, mitotic to meiotic cell cycle"/>
    <property type="evidence" value="ECO:0000315"/>
    <property type="project" value="PomBase"/>
</dbReference>
<dbReference type="GO" id="GO:0007089">
    <property type="term" value="P:traversing start control point of mitotic cell cycle"/>
    <property type="evidence" value="ECO:0000316"/>
    <property type="project" value="PomBase"/>
</dbReference>
<dbReference type="CDD" id="cd20568">
    <property type="entry name" value="CYCLIN_CLBs_yeast_rpt1"/>
    <property type="match status" value="1"/>
</dbReference>
<dbReference type="CDD" id="cd20512">
    <property type="entry name" value="CYCLIN_CLBs_yeast_rpt2"/>
    <property type="match status" value="1"/>
</dbReference>
<dbReference type="FunFam" id="1.10.472.10:FF:000001">
    <property type="entry name" value="G2/mitotic-specific cyclin"/>
    <property type="match status" value="1"/>
</dbReference>
<dbReference type="Gene3D" id="1.10.472.10">
    <property type="entry name" value="Cyclin-like"/>
    <property type="match status" value="2"/>
</dbReference>
<dbReference type="InterPro" id="IPR039361">
    <property type="entry name" value="Cyclin"/>
</dbReference>
<dbReference type="InterPro" id="IPR013763">
    <property type="entry name" value="Cyclin-like_dom"/>
</dbReference>
<dbReference type="InterPro" id="IPR036915">
    <property type="entry name" value="Cyclin-like_sf"/>
</dbReference>
<dbReference type="InterPro" id="IPR046965">
    <property type="entry name" value="Cyclin_A/B-like"/>
</dbReference>
<dbReference type="InterPro" id="IPR004367">
    <property type="entry name" value="Cyclin_C-dom"/>
</dbReference>
<dbReference type="InterPro" id="IPR006671">
    <property type="entry name" value="Cyclin_N"/>
</dbReference>
<dbReference type="InterPro" id="IPR048258">
    <property type="entry name" value="Cyclins_cyclin-box"/>
</dbReference>
<dbReference type="PANTHER" id="PTHR10177">
    <property type="entry name" value="CYCLINS"/>
    <property type="match status" value="1"/>
</dbReference>
<dbReference type="Pfam" id="PF02984">
    <property type="entry name" value="Cyclin_C"/>
    <property type="match status" value="1"/>
</dbReference>
<dbReference type="Pfam" id="PF00134">
    <property type="entry name" value="Cyclin_N"/>
    <property type="match status" value="1"/>
</dbReference>
<dbReference type="PIRSF" id="PIRSF001771">
    <property type="entry name" value="Cyclin_A_B_D_E"/>
    <property type="match status" value="1"/>
</dbReference>
<dbReference type="SMART" id="SM00385">
    <property type="entry name" value="CYCLIN"/>
    <property type="match status" value="2"/>
</dbReference>
<dbReference type="SMART" id="SM01332">
    <property type="entry name" value="Cyclin_C"/>
    <property type="match status" value="1"/>
</dbReference>
<dbReference type="SUPFAM" id="SSF47954">
    <property type="entry name" value="Cyclin-like"/>
    <property type="match status" value="2"/>
</dbReference>
<dbReference type="PROSITE" id="PS00292">
    <property type="entry name" value="CYCLINS"/>
    <property type="match status" value="1"/>
</dbReference>
<evidence type="ECO:0000256" key="1">
    <source>
        <dbReference type="SAM" id="MobiDB-lite"/>
    </source>
</evidence>
<evidence type="ECO:0000269" key="2">
    <source>
    </source>
</evidence>
<evidence type="ECO:0000269" key="3">
    <source>
    </source>
</evidence>
<evidence type="ECO:0000269" key="4">
    <source>
    </source>
</evidence>
<evidence type="ECO:0000269" key="5">
    <source>
    </source>
</evidence>
<evidence type="ECO:0000269" key="6">
    <source>
    </source>
</evidence>
<evidence type="ECO:0000269" key="7">
    <source>
    </source>
</evidence>
<evidence type="ECO:0000269" key="8">
    <source>
    </source>
</evidence>
<evidence type="ECO:0000269" key="9">
    <source>
    </source>
</evidence>
<evidence type="ECO:0000305" key="10"/>
<proteinExistence type="evidence at protein level"/>
<gene>
    <name type="primary">cig2</name>
    <name type="synonym">cyc17</name>
    <name type="ORF">SPAPB2B4.03</name>
</gene>
<reference key="1">
    <citation type="journal article" date="1993" name="Mol. Cell. Biol.">
        <title>Two fission yeast B-type cyclins, cig2 and Cdc13, have different functions in mitosis.</title>
        <authorList>
            <person name="Bueno A."/>
            <person name="Russell P."/>
        </authorList>
    </citation>
    <scope>NUCLEOTIDE SEQUENCE [MRNA]</scope>
    <scope>FUNCTION</scope>
    <scope>INTERACTION WITH CDC2</scope>
    <source>
        <strain>972 / ATCC 24843</strain>
    </source>
</reference>
<reference key="2">
    <citation type="journal article" date="1994" name="Mol. Cell. Biol.">
        <authorList>
            <person name="Bueno A."/>
            <person name="Russell P."/>
        </authorList>
    </citation>
    <scope>ERRATUM OF PUBMED:8455610</scope>
</reference>
<reference key="3">
    <citation type="journal article" date="1994" name="EMBO J.">
        <title>A B-type cyclin negatively regulates conjugation via interacting with cell cycle 'start' genes in fission yeast.</title>
        <authorList>
            <person name="Obara-Ishihara T."/>
            <person name="Okayama H."/>
        </authorList>
    </citation>
    <scope>NUCLEOTIDE SEQUENCE [MRNA]</scope>
    <scope>FUNCTION</scope>
    <scope>INDUCTION</scope>
</reference>
<reference key="4">
    <citation type="journal article" date="1994" name="Mol. Cell. Biol.">
        <title>Interaction between the Cig1 and Cig2 B-type cyclins in the fission yeast cell cycle.</title>
        <authorList>
            <person name="Connolly T."/>
            <person name="Beach D."/>
        </authorList>
    </citation>
    <scope>NUCLEOTIDE SEQUENCE [MRNA]</scope>
    <scope>FUNCTION</scope>
</reference>
<reference key="5">
    <citation type="journal article" date="2002" name="Nature">
        <title>The genome sequence of Schizosaccharomyces pombe.</title>
        <authorList>
            <person name="Wood V."/>
            <person name="Gwilliam R."/>
            <person name="Rajandream M.A."/>
            <person name="Lyne M.H."/>
            <person name="Lyne R."/>
            <person name="Stewart A."/>
            <person name="Sgouros J.G."/>
            <person name="Peat N."/>
            <person name="Hayles J."/>
            <person name="Baker S.G."/>
            <person name="Basham D."/>
            <person name="Bowman S."/>
            <person name="Brooks K."/>
            <person name="Brown D."/>
            <person name="Brown S."/>
            <person name="Chillingworth T."/>
            <person name="Churcher C.M."/>
            <person name="Collins M."/>
            <person name="Connor R."/>
            <person name="Cronin A."/>
            <person name="Davis P."/>
            <person name="Feltwell T."/>
            <person name="Fraser A."/>
            <person name="Gentles S."/>
            <person name="Goble A."/>
            <person name="Hamlin N."/>
            <person name="Harris D.E."/>
            <person name="Hidalgo J."/>
            <person name="Hodgson G."/>
            <person name="Holroyd S."/>
            <person name="Hornsby T."/>
            <person name="Howarth S."/>
            <person name="Huckle E.J."/>
            <person name="Hunt S."/>
            <person name="Jagels K."/>
            <person name="James K.D."/>
            <person name="Jones L."/>
            <person name="Jones M."/>
            <person name="Leather S."/>
            <person name="McDonald S."/>
            <person name="McLean J."/>
            <person name="Mooney P."/>
            <person name="Moule S."/>
            <person name="Mungall K.L."/>
            <person name="Murphy L.D."/>
            <person name="Niblett D."/>
            <person name="Odell C."/>
            <person name="Oliver K."/>
            <person name="O'Neil S."/>
            <person name="Pearson D."/>
            <person name="Quail M.A."/>
            <person name="Rabbinowitsch E."/>
            <person name="Rutherford K.M."/>
            <person name="Rutter S."/>
            <person name="Saunders D."/>
            <person name="Seeger K."/>
            <person name="Sharp S."/>
            <person name="Skelton J."/>
            <person name="Simmonds M.N."/>
            <person name="Squares R."/>
            <person name="Squares S."/>
            <person name="Stevens K."/>
            <person name="Taylor K."/>
            <person name="Taylor R.G."/>
            <person name="Tivey A."/>
            <person name="Walsh S.V."/>
            <person name="Warren T."/>
            <person name="Whitehead S."/>
            <person name="Woodward J.R."/>
            <person name="Volckaert G."/>
            <person name="Aert R."/>
            <person name="Robben J."/>
            <person name="Grymonprez B."/>
            <person name="Weltjens I."/>
            <person name="Vanstreels E."/>
            <person name="Rieger M."/>
            <person name="Schaefer M."/>
            <person name="Mueller-Auer S."/>
            <person name="Gabel C."/>
            <person name="Fuchs M."/>
            <person name="Duesterhoeft A."/>
            <person name="Fritzc C."/>
            <person name="Holzer E."/>
            <person name="Moestl D."/>
            <person name="Hilbert H."/>
            <person name="Borzym K."/>
            <person name="Langer I."/>
            <person name="Beck A."/>
            <person name="Lehrach H."/>
            <person name="Reinhardt R."/>
            <person name="Pohl T.M."/>
            <person name="Eger P."/>
            <person name="Zimmermann W."/>
            <person name="Wedler H."/>
            <person name="Wambutt R."/>
            <person name="Purnelle B."/>
            <person name="Goffeau A."/>
            <person name="Cadieu E."/>
            <person name="Dreano S."/>
            <person name="Gloux S."/>
            <person name="Lelaure V."/>
            <person name="Mottier S."/>
            <person name="Galibert F."/>
            <person name="Aves S.J."/>
            <person name="Xiang Z."/>
            <person name="Hunt C."/>
            <person name="Moore K."/>
            <person name="Hurst S.M."/>
            <person name="Lucas M."/>
            <person name="Rochet M."/>
            <person name="Gaillardin C."/>
            <person name="Tallada V.A."/>
            <person name="Garzon A."/>
            <person name="Thode G."/>
            <person name="Daga R.R."/>
            <person name="Cruzado L."/>
            <person name="Jimenez J."/>
            <person name="Sanchez M."/>
            <person name="del Rey F."/>
            <person name="Benito J."/>
            <person name="Dominguez A."/>
            <person name="Revuelta J.L."/>
            <person name="Moreno S."/>
            <person name="Armstrong J."/>
            <person name="Forsburg S.L."/>
            <person name="Cerutti L."/>
            <person name="Lowe T."/>
            <person name="McCombie W.R."/>
            <person name="Paulsen I."/>
            <person name="Potashkin J."/>
            <person name="Shpakovski G.V."/>
            <person name="Ussery D."/>
            <person name="Barrell B.G."/>
            <person name="Nurse P."/>
        </authorList>
    </citation>
    <scope>NUCLEOTIDE SEQUENCE [LARGE SCALE GENOMIC DNA]</scope>
    <source>
        <strain>972 / ATCC 24843</strain>
    </source>
</reference>
<reference key="6">
    <citation type="journal article" date="1996" name="Mol. Cell. Biol.">
        <title>Cig2, a B-type cyclin, promotes the onset of S in Schizosaccharomyces pombe.</title>
        <authorList>
            <person name="Mondesert O."/>
            <person name="McGowan C.H."/>
            <person name="Russell P."/>
        </authorList>
    </citation>
    <scope>FUNCTION</scope>
</reference>
<reference key="7">
    <citation type="journal article" date="1996" name="Trends Genet.">
        <title>A quantitative model for the cdc2 control of S phase and mitosis in fission yeast.</title>
        <authorList>
            <person name="Stern B."/>
            <person name="Nurse P."/>
        </authorList>
    </citation>
    <scope>REVIEW ON ASSOCIATION WITH CDC2</scope>
</reference>
<reference key="8">
    <citation type="journal article" date="1998" name="Mol. Biol. Cell">
        <title>Cyclin B proteolysis and the cyclin-dependent kinase inhibitor rum1p are required for pheromone-induced G1 arrest in fission yeast.</title>
        <authorList>
            <person name="Stern B."/>
            <person name="Nurse P."/>
        </authorList>
    </citation>
    <scope>INTERACTION WITH RUM1</scope>
</reference>
<reference key="9">
    <citation type="journal article" date="2000" name="Mol. Cell">
        <title>The spike of S phase cyclin Cig2 expression at the G1-S border in fission yeast requires both APC and SCF ubiquitin ligases.</title>
        <authorList>
            <person name="Yamano H."/>
            <person name="Kitamura K."/>
            <person name="Kominami K."/>
            <person name="Lehmann A."/>
            <person name="Hunt T."/>
            <person name="Toda T."/>
        </authorList>
    </citation>
    <scope>FUNCTION</scope>
    <scope>INTERACTION WITH CDC2</scope>
    <scope>SUBCELLULAR LOCATION</scope>
    <scope>PHOSPHORYLATION</scope>
    <scope>DESTRUCTION BOX MOTIF</scope>
    <scope>MUTAGENESIS OF ARG-51; LEU-54; ARG-169; GLU-170; ILE-171; SER-268 AND THR-329</scope>
</reference>
<reference key="10">
    <citation type="journal article" date="2001" name="Nat. Cell Biol.">
        <title>Feedback regulation of the MBF transcription factor by cyclin Cig2.</title>
        <authorList>
            <person name="Ayte J."/>
            <person name="Schweitzer C."/>
            <person name="Zarzov P."/>
            <person name="Nurse P."/>
            <person name="DeCaprio J.A."/>
        </authorList>
    </citation>
    <scope>FUNCTION</scope>
    <scope>INTERACTION WITH RES2</scope>
</reference>
<reference key="11">
    <citation type="journal article" date="2004" name="J. Biol. Chem.">
        <title>Requirement of the SCFPop1/Pop2 ubiquitin ligase for degradation of the fission yeast S phase cyclin Cig2.</title>
        <authorList>
            <person name="Yamano H."/>
            <person name="Kominami K."/>
            <person name="Harrison C."/>
            <person name="Kitamura K."/>
            <person name="Katayama S."/>
            <person name="Dhut S."/>
            <person name="Hunt T."/>
            <person name="Toda T."/>
        </authorList>
    </citation>
    <scope>FUNCTION</scope>
    <scope>INTERACTION WITH POP1</scope>
</reference>
<reference key="12">
    <citation type="journal article" date="2006" name="Nat. Biotechnol.">
        <title>ORFeome cloning and global analysis of protein localization in the fission yeast Schizosaccharomyces pombe.</title>
        <authorList>
            <person name="Matsuyama A."/>
            <person name="Arai R."/>
            <person name="Yashiroda Y."/>
            <person name="Shirai A."/>
            <person name="Kamata A."/>
            <person name="Sekido S."/>
            <person name="Kobayashi Y."/>
            <person name="Hashimoto A."/>
            <person name="Hamamoto M."/>
            <person name="Hiraoka Y."/>
            <person name="Horinouchi S."/>
            <person name="Yoshida M."/>
        </authorList>
    </citation>
    <scope>SUBCELLULAR LOCATION [LARGE SCALE ANALYSIS]</scope>
</reference>
<accession>P36630</accession>
<sequence length="411" mass="47477">MALYSISKPVGSKINKHSYQDENTLVGKQALSKGTEKTKLSTNFEINLPRRTVLSDVSNVGKNNADEKDTKKAKRSFDESNLSTNEEADKPVESKFVKKLKVYSKNADPSVETLQKDRVSNVDDHLSSNPLMAEEYAPEIFEYIRKLDLKCLPNPKYMDQQKELTWKMREILNEWLVEIHSNFCLMPETLYLAVNIIDRFLSRRSCSLSKFQLTGITALLIASKYEEVMCPSIQNFVYMTDGAFTVEDVCVAERYMLNVLNFDLSYPSPLNFLRKISQAEGYDAQTRTLGKYLTEIYLFDHDLLRYPMSKIAAAAMYLSRRLLRRGPWTPKLVESSGGYEEHELKEIAYIMLHYHNKPLEHKAFFQKYSSKRFLKASIFVHQLVRQRYSVNRTDDDDLQSEPSSSLTNDGH</sequence>
<name>CG22_SCHPO</name>
<protein>
    <recommendedName>
        <fullName>G2/mitotic-specific cyclin cig2</fullName>
    </recommendedName>
</protein>